<evidence type="ECO:0000255" key="1">
    <source>
        <dbReference type="HAMAP-Rule" id="MF_00380"/>
    </source>
</evidence>
<protein>
    <recommendedName>
        <fullName evidence="1">Integration host factor subunit alpha</fullName>
        <shortName evidence="1">IHF-alpha</shortName>
    </recommendedName>
</protein>
<sequence length="98" mass="11178">MTALTKADMADHLSELTSLNRREAKQMVELFFDEISQALIAGEQVKLSGFGNFELRDKRERPGRNPKTGEEIPISARRVVTFRAGQKFRQRVGNEQID</sequence>
<dbReference type="EMBL" id="CP001172">
    <property type="protein sequence ID" value="ACJ57319.1"/>
    <property type="molecule type" value="Genomic_DNA"/>
</dbReference>
<dbReference type="RefSeq" id="WP_000126166.1">
    <property type="nucleotide sequence ID" value="NZ_CP001172.1"/>
</dbReference>
<dbReference type="SMR" id="B7GZZ4"/>
<dbReference type="HOGENOM" id="CLU_105066_1_3_6"/>
<dbReference type="Proteomes" id="UP000006924">
    <property type="component" value="Chromosome"/>
</dbReference>
<dbReference type="GO" id="GO:0005829">
    <property type="term" value="C:cytosol"/>
    <property type="evidence" value="ECO:0007669"/>
    <property type="project" value="TreeGrafter"/>
</dbReference>
<dbReference type="GO" id="GO:0003677">
    <property type="term" value="F:DNA binding"/>
    <property type="evidence" value="ECO:0007669"/>
    <property type="project" value="UniProtKB-UniRule"/>
</dbReference>
<dbReference type="GO" id="GO:0030527">
    <property type="term" value="F:structural constituent of chromatin"/>
    <property type="evidence" value="ECO:0007669"/>
    <property type="project" value="InterPro"/>
</dbReference>
<dbReference type="GO" id="GO:0006310">
    <property type="term" value="P:DNA recombination"/>
    <property type="evidence" value="ECO:0007669"/>
    <property type="project" value="UniProtKB-UniRule"/>
</dbReference>
<dbReference type="GO" id="GO:0009893">
    <property type="term" value="P:positive regulation of metabolic process"/>
    <property type="evidence" value="ECO:0007669"/>
    <property type="project" value="UniProtKB-ARBA"/>
</dbReference>
<dbReference type="GO" id="GO:0006355">
    <property type="term" value="P:regulation of DNA-templated transcription"/>
    <property type="evidence" value="ECO:0007669"/>
    <property type="project" value="UniProtKB-UniRule"/>
</dbReference>
<dbReference type="GO" id="GO:0006417">
    <property type="term" value="P:regulation of translation"/>
    <property type="evidence" value="ECO:0007669"/>
    <property type="project" value="UniProtKB-UniRule"/>
</dbReference>
<dbReference type="CDD" id="cd13835">
    <property type="entry name" value="IHF_A"/>
    <property type="match status" value="1"/>
</dbReference>
<dbReference type="FunFam" id="4.10.520.10:FF:000002">
    <property type="entry name" value="Integration host factor subunit alpha"/>
    <property type="match status" value="1"/>
</dbReference>
<dbReference type="Gene3D" id="4.10.520.10">
    <property type="entry name" value="IHF-like DNA-binding proteins"/>
    <property type="match status" value="1"/>
</dbReference>
<dbReference type="HAMAP" id="MF_00380">
    <property type="entry name" value="IHF_alpha"/>
    <property type="match status" value="1"/>
</dbReference>
<dbReference type="InterPro" id="IPR000119">
    <property type="entry name" value="Hist_DNA-bd"/>
</dbReference>
<dbReference type="InterPro" id="IPR020816">
    <property type="entry name" value="Histone-like_DNA-bd_CS"/>
</dbReference>
<dbReference type="InterPro" id="IPR010992">
    <property type="entry name" value="IHF-like_DNA-bd_dom_sf"/>
</dbReference>
<dbReference type="InterPro" id="IPR005684">
    <property type="entry name" value="IHF_alpha"/>
</dbReference>
<dbReference type="NCBIfam" id="TIGR00987">
    <property type="entry name" value="himA"/>
    <property type="match status" value="1"/>
</dbReference>
<dbReference type="NCBIfam" id="NF001401">
    <property type="entry name" value="PRK00285.1"/>
    <property type="match status" value="1"/>
</dbReference>
<dbReference type="PANTHER" id="PTHR33175">
    <property type="entry name" value="DNA-BINDING PROTEIN HU"/>
    <property type="match status" value="1"/>
</dbReference>
<dbReference type="PANTHER" id="PTHR33175:SF2">
    <property type="entry name" value="INTEGRATION HOST FACTOR SUBUNIT ALPHA"/>
    <property type="match status" value="1"/>
</dbReference>
<dbReference type="Pfam" id="PF00216">
    <property type="entry name" value="Bac_DNA_binding"/>
    <property type="match status" value="1"/>
</dbReference>
<dbReference type="PRINTS" id="PR01727">
    <property type="entry name" value="DNABINDINGHU"/>
</dbReference>
<dbReference type="SMART" id="SM00411">
    <property type="entry name" value="BHL"/>
    <property type="match status" value="1"/>
</dbReference>
<dbReference type="SUPFAM" id="SSF47729">
    <property type="entry name" value="IHF-like DNA-binding proteins"/>
    <property type="match status" value="1"/>
</dbReference>
<dbReference type="PROSITE" id="PS00045">
    <property type="entry name" value="HISTONE_LIKE"/>
    <property type="match status" value="1"/>
</dbReference>
<proteinExistence type="inferred from homology"/>
<name>IHFA_ACIB3</name>
<organism>
    <name type="scientific">Acinetobacter baumannii (strain AB307-0294)</name>
    <dbReference type="NCBI Taxonomy" id="557600"/>
    <lineage>
        <taxon>Bacteria</taxon>
        <taxon>Pseudomonadati</taxon>
        <taxon>Pseudomonadota</taxon>
        <taxon>Gammaproteobacteria</taxon>
        <taxon>Moraxellales</taxon>
        <taxon>Moraxellaceae</taxon>
        <taxon>Acinetobacter</taxon>
        <taxon>Acinetobacter calcoaceticus/baumannii complex</taxon>
    </lineage>
</organism>
<reference key="1">
    <citation type="journal article" date="2008" name="J. Bacteriol.">
        <title>Comparative genome sequence analysis of multidrug-resistant Acinetobacter baumannii.</title>
        <authorList>
            <person name="Adams M.D."/>
            <person name="Goglin K."/>
            <person name="Molyneaux N."/>
            <person name="Hujer K.M."/>
            <person name="Lavender H."/>
            <person name="Jamison J.J."/>
            <person name="MacDonald I.J."/>
            <person name="Martin K.M."/>
            <person name="Russo T."/>
            <person name="Campagnari A.A."/>
            <person name="Hujer A.M."/>
            <person name="Bonomo R.A."/>
            <person name="Gill S.R."/>
        </authorList>
    </citation>
    <scope>NUCLEOTIDE SEQUENCE [LARGE SCALE GENOMIC DNA]</scope>
    <source>
        <strain>AB307-0294</strain>
    </source>
</reference>
<gene>
    <name evidence="1" type="primary">ihfA</name>
    <name evidence="1" type="synonym">himA</name>
    <name type="ordered locus">ABBFA_002958</name>
</gene>
<keyword id="KW-0233">DNA recombination</keyword>
<keyword id="KW-0238">DNA-binding</keyword>
<keyword id="KW-0804">Transcription</keyword>
<keyword id="KW-0805">Transcription regulation</keyword>
<keyword id="KW-0810">Translation regulation</keyword>
<comment type="function">
    <text evidence="1">This protein is one of the two subunits of integration host factor, a specific DNA-binding protein that functions in genetic recombination as well as in transcriptional and translational control.</text>
</comment>
<comment type="subunit">
    <text evidence="1">Heterodimer of an alpha and a beta chain.</text>
</comment>
<comment type="similarity">
    <text evidence="1">Belongs to the bacterial histone-like protein family.</text>
</comment>
<feature type="chain" id="PRO_1000122119" description="Integration host factor subunit alpha">
    <location>
        <begin position="1"/>
        <end position="98"/>
    </location>
</feature>
<accession>B7GZZ4</accession>